<accession>B8D8L5</accession>
<proteinExistence type="inferred from homology"/>
<reference key="1">
    <citation type="journal article" date="2009" name="Science">
        <title>The dynamics and time scale of ongoing genomic erosion in symbiotic bacteria.</title>
        <authorList>
            <person name="Moran N.A."/>
            <person name="McLaughlin H.J."/>
            <person name="Sorek R."/>
        </authorList>
    </citation>
    <scope>NUCLEOTIDE SEQUENCE [LARGE SCALE GENOMIC DNA]</scope>
    <source>
        <strain>5A</strain>
    </source>
</reference>
<feature type="chain" id="PRO_1000194283" description="Small ribosomal subunit protein bS21">
    <location>
        <begin position="1"/>
        <end position="71"/>
    </location>
</feature>
<name>RS21_BUCA5</name>
<dbReference type="EMBL" id="CP001161">
    <property type="protein sequence ID" value="ACL30437.1"/>
    <property type="molecule type" value="Genomic_DNA"/>
</dbReference>
<dbReference type="RefSeq" id="WP_009874014.1">
    <property type="nucleotide sequence ID" value="NC_011833.1"/>
</dbReference>
<dbReference type="SMR" id="B8D8L5"/>
<dbReference type="KEGG" id="bap:BUAP5A_056"/>
<dbReference type="HOGENOM" id="CLU_159258_1_0_6"/>
<dbReference type="OrthoDB" id="9799244at2"/>
<dbReference type="Proteomes" id="UP000006904">
    <property type="component" value="Chromosome"/>
</dbReference>
<dbReference type="GO" id="GO:1990904">
    <property type="term" value="C:ribonucleoprotein complex"/>
    <property type="evidence" value="ECO:0007669"/>
    <property type="project" value="UniProtKB-KW"/>
</dbReference>
<dbReference type="GO" id="GO:0005840">
    <property type="term" value="C:ribosome"/>
    <property type="evidence" value="ECO:0007669"/>
    <property type="project" value="UniProtKB-KW"/>
</dbReference>
<dbReference type="GO" id="GO:0003735">
    <property type="term" value="F:structural constituent of ribosome"/>
    <property type="evidence" value="ECO:0007669"/>
    <property type="project" value="InterPro"/>
</dbReference>
<dbReference type="GO" id="GO:0006412">
    <property type="term" value="P:translation"/>
    <property type="evidence" value="ECO:0007669"/>
    <property type="project" value="UniProtKB-UniRule"/>
</dbReference>
<dbReference type="FunFam" id="1.20.5.1150:FF:000001">
    <property type="entry name" value="30S ribosomal protein S21"/>
    <property type="match status" value="1"/>
</dbReference>
<dbReference type="Gene3D" id="1.20.5.1150">
    <property type="entry name" value="Ribosomal protein S8"/>
    <property type="match status" value="1"/>
</dbReference>
<dbReference type="HAMAP" id="MF_00358">
    <property type="entry name" value="Ribosomal_bS21"/>
    <property type="match status" value="1"/>
</dbReference>
<dbReference type="InterPro" id="IPR001911">
    <property type="entry name" value="Ribosomal_bS21"/>
</dbReference>
<dbReference type="InterPro" id="IPR018278">
    <property type="entry name" value="Ribosomal_bS21_CS"/>
</dbReference>
<dbReference type="InterPro" id="IPR038380">
    <property type="entry name" value="Ribosomal_bS21_sf"/>
</dbReference>
<dbReference type="NCBIfam" id="TIGR00030">
    <property type="entry name" value="S21p"/>
    <property type="match status" value="1"/>
</dbReference>
<dbReference type="PANTHER" id="PTHR21109">
    <property type="entry name" value="MITOCHONDRIAL 28S RIBOSOMAL PROTEIN S21"/>
    <property type="match status" value="1"/>
</dbReference>
<dbReference type="PANTHER" id="PTHR21109:SF22">
    <property type="entry name" value="SMALL RIBOSOMAL SUBUNIT PROTEIN BS21"/>
    <property type="match status" value="1"/>
</dbReference>
<dbReference type="Pfam" id="PF01165">
    <property type="entry name" value="Ribosomal_S21"/>
    <property type="match status" value="1"/>
</dbReference>
<dbReference type="PRINTS" id="PR00976">
    <property type="entry name" value="RIBOSOMALS21"/>
</dbReference>
<dbReference type="PROSITE" id="PS01181">
    <property type="entry name" value="RIBOSOMAL_S21"/>
    <property type="match status" value="1"/>
</dbReference>
<keyword id="KW-0687">Ribonucleoprotein</keyword>
<keyword id="KW-0689">Ribosomal protein</keyword>
<organism>
    <name type="scientific">Buchnera aphidicola subsp. Acyrthosiphon pisum (strain 5A)</name>
    <dbReference type="NCBI Taxonomy" id="563178"/>
    <lineage>
        <taxon>Bacteria</taxon>
        <taxon>Pseudomonadati</taxon>
        <taxon>Pseudomonadota</taxon>
        <taxon>Gammaproteobacteria</taxon>
        <taxon>Enterobacterales</taxon>
        <taxon>Erwiniaceae</taxon>
        <taxon>Buchnera</taxon>
    </lineage>
</organism>
<gene>
    <name evidence="1" type="primary">rpsU</name>
    <name type="ordered locus">BUAP5A_056</name>
</gene>
<comment type="similarity">
    <text evidence="1">Belongs to the bacterial ribosomal protein bS21 family.</text>
</comment>
<evidence type="ECO:0000255" key="1">
    <source>
        <dbReference type="HAMAP-Rule" id="MF_00358"/>
    </source>
</evidence>
<evidence type="ECO:0000305" key="2"/>
<protein>
    <recommendedName>
        <fullName evidence="1">Small ribosomal subunit protein bS21</fullName>
    </recommendedName>
    <alternativeName>
        <fullName evidence="2">30S ribosomal protein S21</fullName>
    </alternativeName>
</protein>
<sequence length="71" mass="8578">MPIIKVRENEPFDVALRRFKRSCEKAGILAEIRRREFYEKPTTERKRAKASAVKRLAKKLTRENARRIRMY</sequence>